<reference key="1">
    <citation type="journal article" date="2009" name="Stand. Genomic Sci.">
        <title>Complete genome sequence of Methanocorpusculum labreanum type strain Z.</title>
        <authorList>
            <person name="Anderson I.J."/>
            <person name="Sieprawska-Lupa M."/>
            <person name="Goltsman E."/>
            <person name="Lapidus A."/>
            <person name="Copeland A."/>
            <person name="Glavina Del Rio T."/>
            <person name="Tice H."/>
            <person name="Dalin E."/>
            <person name="Barry K."/>
            <person name="Pitluck S."/>
            <person name="Hauser L."/>
            <person name="Land M."/>
            <person name="Lucas S."/>
            <person name="Richardson P."/>
            <person name="Whitman W.B."/>
            <person name="Kyrpides N.C."/>
        </authorList>
    </citation>
    <scope>NUCLEOTIDE SEQUENCE [LARGE SCALE GENOMIC DNA]</scope>
    <source>
        <strain>ATCC 43576 / DSM 4855 / Z</strain>
    </source>
</reference>
<feature type="chain" id="PRO_1000006704" description="Aspartate--tRNA(Asp/Asn) ligase">
    <location>
        <begin position="1"/>
        <end position="429"/>
    </location>
</feature>
<feature type="region of interest" description="Aspartate" evidence="1">
    <location>
        <begin position="188"/>
        <end position="191"/>
    </location>
</feature>
<feature type="binding site" evidence="1">
    <location>
        <position position="166"/>
    </location>
    <ligand>
        <name>L-aspartate</name>
        <dbReference type="ChEBI" id="CHEBI:29991"/>
    </ligand>
</feature>
<feature type="binding site" evidence="1">
    <location>
        <begin position="210"/>
        <end position="212"/>
    </location>
    <ligand>
        <name>ATP</name>
        <dbReference type="ChEBI" id="CHEBI:30616"/>
    </ligand>
</feature>
<feature type="binding site" evidence="1">
    <location>
        <position position="210"/>
    </location>
    <ligand>
        <name>L-aspartate</name>
        <dbReference type="ChEBI" id="CHEBI:29991"/>
    </ligand>
</feature>
<feature type="binding site" evidence="1">
    <location>
        <begin position="218"/>
        <end position="220"/>
    </location>
    <ligand>
        <name>ATP</name>
        <dbReference type="ChEBI" id="CHEBI:30616"/>
    </ligand>
</feature>
<feature type="binding site" evidence="1">
    <location>
        <position position="352"/>
    </location>
    <ligand>
        <name>ATP</name>
        <dbReference type="ChEBI" id="CHEBI:30616"/>
    </ligand>
</feature>
<feature type="binding site" evidence="1">
    <location>
        <position position="352"/>
    </location>
    <ligand>
        <name>Mg(2+)</name>
        <dbReference type="ChEBI" id="CHEBI:18420"/>
        <label>2</label>
    </ligand>
</feature>
<feature type="binding site" evidence="1">
    <location>
        <position position="352"/>
    </location>
    <ligand>
        <name>Mg(2+)</name>
        <dbReference type="ChEBI" id="CHEBI:18420"/>
        <label>3</label>
    </ligand>
</feature>
<feature type="binding site" evidence="1">
    <location>
        <position position="355"/>
    </location>
    <ligand>
        <name>L-aspartate</name>
        <dbReference type="ChEBI" id="CHEBI:29991"/>
    </ligand>
</feature>
<feature type="binding site" evidence="1">
    <location>
        <position position="355"/>
    </location>
    <ligand>
        <name>Mg(2+)</name>
        <dbReference type="ChEBI" id="CHEBI:18420"/>
        <label>2</label>
    </ligand>
</feature>
<feature type="binding site" evidence="1">
    <location>
        <position position="359"/>
    </location>
    <ligand>
        <name>L-aspartate</name>
        <dbReference type="ChEBI" id="CHEBI:29991"/>
    </ligand>
</feature>
<feature type="binding site" evidence="1">
    <location>
        <begin position="400"/>
        <end position="403"/>
    </location>
    <ligand>
        <name>ATP</name>
        <dbReference type="ChEBI" id="CHEBI:30616"/>
    </ligand>
</feature>
<feature type="site" description="Important for tRNA non-discrimination" evidence="1">
    <location>
        <position position="81"/>
    </location>
</feature>
<proteinExistence type="inferred from homology"/>
<organism>
    <name type="scientific">Methanocorpusculum labreanum (strain ATCC 43576 / DSM 4855 / Z)</name>
    <dbReference type="NCBI Taxonomy" id="410358"/>
    <lineage>
        <taxon>Archaea</taxon>
        <taxon>Methanobacteriati</taxon>
        <taxon>Methanobacteriota</taxon>
        <taxon>Stenosarchaea group</taxon>
        <taxon>Methanomicrobia</taxon>
        <taxon>Methanomicrobiales</taxon>
        <taxon>Methanocorpusculaceae</taxon>
        <taxon>Methanocorpusculum</taxon>
    </lineage>
</organism>
<sequence length="429" mass="48293">MRIPIKDVTPEIGHARIAGWVHEERDLGGLTFLLVRDRTGILQVTIPKKKVTPEVLAAVKEATRESVIECEGVVKATEKAPGGRELVPDMLRVVSRAETPLPLDVSEKVPAELDTRLDNRYLDLRKPRINAIFQIRNACLRAISEYLWDNGFTQVQTPKIVAAATEGGTELFPLAYFDKEAFLNQSPQLYKQMLMSAGFDRVFEIGAIFRAEEHNTVRHLNEATSIDIEMSFANEEDAMHVLENVVASAYQYVADHCGDALATLGITDFKVPTVPFPRITYKEAIEISTAGGEPLVFGDDLSTAAERIVGEKMGTMYFITEWPTSTRPFYTMPFEDRPEVCRAFDMMHPRMELTSGAQRCHIHSLLVEQIKAKGLNPDAFEFYLNPFRYGMPPHAGWGLGAERLVMTMLDLQNIREAVLFPRDRHRVSP</sequence>
<dbReference type="EC" id="6.1.1.23" evidence="1"/>
<dbReference type="EMBL" id="CP000559">
    <property type="protein sequence ID" value="ABN06217.1"/>
    <property type="molecule type" value="Genomic_DNA"/>
</dbReference>
<dbReference type="RefSeq" id="WP_011832418.1">
    <property type="nucleotide sequence ID" value="NC_008942.1"/>
</dbReference>
<dbReference type="SMR" id="A2SPG1"/>
<dbReference type="STRING" id="410358.Mlab_0039"/>
<dbReference type="GeneID" id="4795690"/>
<dbReference type="KEGG" id="mla:Mlab_0039"/>
<dbReference type="eggNOG" id="arCOG00406">
    <property type="taxonomic scope" value="Archaea"/>
</dbReference>
<dbReference type="HOGENOM" id="CLU_004553_2_1_2"/>
<dbReference type="OrthoDB" id="5908at2157"/>
<dbReference type="Proteomes" id="UP000000365">
    <property type="component" value="Chromosome"/>
</dbReference>
<dbReference type="GO" id="GO:0017101">
    <property type="term" value="C:aminoacyl-tRNA synthetase multienzyme complex"/>
    <property type="evidence" value="ECO:0007669"/>
    <property type="project" value="TreeGrafter"/>
</dbReference>
<dbReference type="GO" id="GO:0005829">
    <property type="term" value="C:cytosol"/>
    <property type="evidence" value="ECO:0007669"/>
    <property type="project" value="TreeGrafter"/>
</dbReference>
<dbReference type="GO" id="GO:0004815">
    <property type="term" value="F:aspartate-tRNA ligase activity"/>
    <property type="evidence" value="ECO:0007669"/>
    <property type="project" value="UniProtKB-UniRule"/>
</dbReference>
<dbReference type="GO" id="GO:0050560">
    <property type="term" value="F:aspartate-tRNA(Asn) ligase activity"/>
    <property type="evidence" value="ECO:0007669"/>
    <property type="project" value="UniProtKB-EC"/>
</dbReference>
<dbReference type="GO" id="GO:0005524">
    <property type="term" value="F:ATP binding"/>
    <property type="evidence" value="ECO:0007669"/>
    <property type="project" value="UniProtKB-UniRule"/>
</dbReference>
<dbReference type="GO" id="GO:0000287">
    <property type="term" value="F:magnesium ion binding"/>
    <property type="evidence" value="ECO:0007669"/>
    <property type="project" value="UniProtKB-UniRule"/>
</dbReference>
<dbReference type="GO" id="GO:0003723">
    <property type="term" value="F:RNA binding"/>
    <property type="evidence" value="ECO:0007669"/>
    <property type="project" value="TreeGrafter"/>
</dbReference>
<dbReference type="GO" id="GO:0006422">
    <property type="term" value="P:aspartyl-tRNA aminoacylation"/>
    <property type="evidence" value="ECO:0007669"/>
    <property type="project" value="UniProtKB-UniRule"/>
</dbReference>
<dbReference type="CDD" id="cd00776">
    <property type="entry name" value="AsxRS_core"/>
    <property type="match status" value="1"/>
</dbReference>
<dbReference type="FunFam" id="3.30.930.10:FF:000038">
    <property type="entry name" value="Aspartate--tRNA ligase"/>
    <property type="match status" value="1"/>
</dbReference>
<dbReference type="Gene3D" id="3.30.930.10">
    <property type="entry name" value="Bira Bifunctional Protein, Domain 2"/>
    <property type="match status" value="1"/>
</dbReference>
<dbReference type="Gene3D" id="2.40.50.140">
    <property type="entry name" value="Nucleic acid-binding proteins"/>
    <property type="match status" value="1"/>
</dbReference>
<dbReference type="HAMAP" id="MF_02075">
    <property type="entry name" value="Asp_tRNA_synth_type2"/>
    <property type="match status" value="1"/>
</dbReference>
<dbReference type="InterPro" id="IPR004364">
    <property type="entry name" value="Aa-tRNA-synt_II"/>
</dbReference>
<dbReference type="InterPro" id="IPR006195">
    <property type="entry name" value="aa-tRNA-synth_II"/>
</dbReference>
<dbReference type="InterPro" id="IPR045864">
    <property type="entry name" value="aa-tRNA-synth_II/BPL/LPL"/>
</dbReference>
<dbReference type="InterPro" id="IPR004523">
    <property type="entry name" value="Asp-tRNA_synthase_2"/>
</dbReference>
<dbReference type="InterPro" id="IPR002312">
    <property type="entry name" value="Asp/Asn-tRNA-synth_IIb"/>
</dbReference>
<dbReference type="InterPro" id="IPR012340">
    <property type="entry name" value="NA-bd_OB-fold"/>
</dbReference>
<dbReference type="InterPro" id="IPR004365">
    <property type="entry name" value="NA-bd_OB_tRNA"/>
</dbReference>
<dbReference type="NCBIfam" id="TIGR00458">
    <property type="entry name" value="aspS_nondisc"/>
    <property type="match status" value="1"/>
</dbReference>
<dbReference type="NCBIfam" id="NF003483">
    <property type="entry name" value="PRK05159.1"/>
    <property type="match status" value="1"/>
</dbReference>
<dbReference type="PANTHER" id="PTHR43450:SF1">
    <property type="entry name" value="ASPARTATE--TRNA LIGASE, CYTOPLASMIC"/>
    <property type="match status" value="1"/>
</dbReference>
<dbReference type="PANTHER" id="PTHR43450">
    <property type="entry name" value="ASPARTYL-TRNA SYNTHETASE"/>
    <property type="match status" value="1"/>
</dbReference>
<dbReference type="Pfam" id="PF00152">
    <property type="entry name" value="tRNA-synt_2"/>
    <property type="match status" value="1"/>
</dbReference>
<dbReference type="Pfam" id="PF01336">
    <property type="entry name" value="tRNA_anti-codon"/>
    <property type="match status" value="1"/>
</dbReference>
<dbReference type="PRINTS" id="PR01042">
    <property type="entry name" value="TRNASYNTHASP"/>
</dbReference>
<dbReference type="SUPFAM" id="SSF55681">
    <property type="entry name" value="Class II aaRS and biotin synthetases"/>
    <property type="match status" value="1"/>
</dbReference>
<dbReference type="SUPFAM" id="SSF50249">
    <property type="entry name" value="Nucleic acid-binding proteins"/>
    <property type="match status" value="1"/>
</dbReference>
<dbReference type="PROSITE" id="PS50862">
    <property type="entry name" value="AA_TRNA_LIGASE_II"/>
    <property type="match status" value="1"/>
</dbReference>
<comment type="function">
    <text evidence="1">Aspartyl-tRNA synthetase with relaxed tRNA specificity since it is able to aspartylate not only its cognate tRNA(Asp) but also tRNA(Asn). Reaction proceeds in two steps: L-aspartate is first activated by ATP to form Asp-AMP and then transferred to the acceptor end of tRNA(Asp/Asn).</text>
</comment>
<comment type="catalytic activity">
    <reaction evidence="1">
        <text>tRNA(Asx) + L-aspartate + ATP = L-aspartyl-tRNA(Asx) + AMP + diphosphate</text>
        <dbReference type="Rhea" id="RHEA:18349"/>
        <dbReference type="Rhea" id="RHEA-COMP:9710"/>
        <dbReference type="Rhea" id="RHEA-COMP:9711"/>
        <dbReference type="ChEBI" id="CHEBI:29991"/>
        <dbReference type="ChEBI" id="CHEBI:30616"/>
        <dbReference type="ChEBI" id="CHEBI:33019"/>
        <dbReference type="ChEBI" id="CHEBI:78442"/>
        <dbReference type="ChEBI" id="CHEBI:78516"/>
        <dbReference type="ChEBI" id="CHEBI:456215"/>
        <dbReference type="EC" id="6.1.1.23"/>
    </reaction>
</comment>
<comment type="cofactor">
    <cofactor evidence="1">
        <name>Mg(2+)</name>
        <dbReference type="ChEBI" id="CHEBI:18420"/>
    </cofactor>
    <text evidence="1">Binds 3 Mg(2+) cations per subunit. The strongest magnesium site (Mg1) is bound to the beta- and gamma-phosphates of ATP and four water molecules complete its coordination sphere.</text>
</comment>
<comment type="subunit">
    <text evidence="1">Homodimer.</text>
</comment>
<comment type="subcellular location">
    <subcellularLocation>
        <location evidence="1">Cytoplasm</location>
    </subcellularLocation>
</comment>
<comment type="similarity">
    <text evidence="1">Belongs to the class-II aminoacyl-tRNA synthetase family. Type 2 subfamily.</text>
</comment>
<protein>
    <recommendedName>
        <fullName evidence="1">Aspartate--tRNA(Asp/Asn) ligase</fullName>
        <ecNumber evidence="1">6.1.1.23</ecNumber>
    </recommendedName>
    <alternativeName>
        <fullName evidence="1">Aspartyl-tRNA synthetase</fullName>
        <shortName evidence="1">AspRS</shortName>
    </alternativeName>
    <alternativeName>
        <fullName evidence="1">Non-discriminating aspartyl-tRNA synthetase</fullName>
        <shortName evidence="1">ND-AspRS</shortName>
    </alternativeName>
</protein>
<evidence type="ECO:0000255" key="1">
    <source>
        <dbReference type="HAMAP-Rule" id="MF_02075"/>
    </source>
</evidence>
<accession>A2SPG1</accession>
<name>SYDND_METLZ</name>
<keyword id="KW-0030">Aminoacyl-tRNA synthetase</keyword>
<keyword id="KW-0067">ATP-binding</keyword>
<keyword id="KW-0963">Cytoplasm</keyword>
<keyword id="KW-0436">Ligase</keyword>
<keyword id="KW-0460">Magnesium</keyword>
<keyword id="KW-0479">Metal-binding</keyword>
<keyword id="KW-0547">Nucleotide-binding</keyword>
<keyword id="KW-0648">Protein biosynthesis</keyword>
<keyword id="KW-1185">Reference proteome</keyword>
<gene>
    <name evidence="1" type="primary">aspS</name>
    <name type="ordered locus">Mlab_0039</name>
</gene>